<protein>
    <recommendedName>
        <fullName evidence="1">Anthranilate phosphoribosyltransferase</fullName>
        <ecNumber evidence="1">2.4.2.18</ecNumber>
    </recommendedName>
</protein>
<sequence>MQSPTAQGTNDGVLPARTWPSVLGALTDGRDLAVDDAKWAMDEIMSDNATSAQIAAFGVALKMKGETPEELRGLADSMLGHARKVPVDDDVVDIVGTGGDRSNTVNISTMASLVVAASGIRVVKHGNRAASSKSGGADVLEALGVKINLGPDEVARCVREVGIGFCFAPVFHPALRFAGAPRKEIGIPTVFNVLGPLTNPARPRAGLIGCAFPGLISVVAGVLAQRGNSALVVRGDDGLDELTTSTTSTVHIVADGSVTTRGFDPRDIGIARVSLDELRGGNADVNAAVARRLLAGETGPVRDAVLLNAAAAIAAFRGLGGRTLEDGLSDGLATAAQSIDSGAAGALLGRWAELTSGLASSK</sequence>
<comment type="function">
    <text evidence="1">Catalyzes the transfer of the phosphoribosyl group of 5-phosphorylribose-1-pyrophosphate (PRPP) to anthranilate to yield N-(5'-phosphoribosyl)-anthranilate (PRA).</text>
</comment>
<comment type="catalytic activity">
    <reaction evidence="1">
        <text>N-(5-phospho-beta-D-ribosyl)anthranilate + diphosphate = 5-phospho-alpha-D-ribose 1-diphosphate + anthranilate</text>
        <dbReference type="Rhea" id="RHEA:11768"/>
        <dbReference type="ChEBI" id="CHEBI:16567"/>
        <dbReference type="ChEBI" id="CHEBI:18277"/>
        <dbReference type="ChEBI" id="CHEBI:33019"/>
        <dbReference type="ChEBI" id="CHEBI:58017"/>
        <dbReference type="EC" id="2.4.2.18"/>
    </reaction>
</comment>
<comment type="cofactor">
    <cofactor evidence="1">
        <name>Mg(2+)</name>
        <dbReference type="ChEBI" id="CHEBI:18420"/>
    </cofactor>
    <text evidence="1">Binds 2 magnesium ions per monomer.</text>
</comment>
<comment type="pathway">
    <text evidence="1">Amino-acid biosynthesis; L-tryptophan biosynthesis; L-tryptophan from chorismate: step 2/5.</text>
</comment>
<comment type="subunit">
    <text evidence="1">Homodimer.</text>
</comment>
<comment type="similarity">
    <text evidence="1">Belongs to the anthranilate phosphoribosyltransferase family.</text>
</comment>
<evidence type="ECO:0000255" key="1">
    <source>
        <dbReference type="HAMAP-Rule" id="MF_00211"/>
    </source>
</evidence>
<accession>C1AU95</accession>
<reference key="1">
    <citation type="submission" date="2009-03" db="EMBL/GenBank/DDBJ databases">
        <title>Comparison of the complete genome sequences of Rhodococcus erythropolis PR4 and Rhodococcus opacus B4.</title>
        <authorList>
            <person name="Takarada H."/>
            <person name="Sekine M."/>
            <person name="Hosoyama A."/>
            <person name="Yamada R."/>
            <person name="Fujisawa T."/>
            <person name="Omata S."/>
            <person name="Shimizu A."/>
            <person name="Tsukatani N."/>
            <person name="Tanikawa S."/>
            <person name="Fujita N."/>
            <person name="Harayama S."/>
        </authorList>
    </citation>
    <scope>NUCLEOTIDE SEQUENCE [LARGE SCALE GENOMIC DNA]</scope>
    <source>
        <strain>B4</strain>
    </source>
</reference>
<dbReference type="EC" id="2.4.2.18" evidence="1"/>
<dbReference type="EMBL" id="AP011115">
    <property type="protein sequence ID" value="BAH49103.1"/>
    <property type="molecule type" value="Genomic_DNA"/>
</dbReference>
<dbReference type="RefSeq" id="WP_012688098.1">
    <property type="nucleotide sequence ID" value="NC_012522.1"/>
</dbReference>
<dbReference type="SMR" id="C1AU95"/>
<dbReference type="STRING" id="632772.ROP_08560"/>
<dbReference type="KEGG" id="rop:ROP_08560"/>
<dbReference type="PATRIC" id="fig|632772.20.peg.919"/>
<dbReference type="HOGENOM" id="CLU_034315_4_1_11"/>
<dbReference type="OrthoDB" id="9806430at2"/>
<dbReference type="UniPathway" id="UPA00035">
    <property type="reaction ID" value="UER00041"/>
</dbReference>
<dbReference type="Proteomes" id="UP000002212">
    <property type="component" value="Chromosome"/>
</dbReference>
<dbReference type="GO" id="GO:0005829">
    <property type="term" value="C:cytosol"/>
    <property type="evidence" value="ECO:0007669"/>
    <property type="project" value="TreeGrafter"/>
</dbReference>
<dbReference type="GO" id="GO:0004048">
    <property type="term" value="F:anthranilate phosphoribosyltransferase activity"/>
    <property type="evidence" value="ECO:0007669"/>
    <property type="project" value="UniProtKB-UniRule"/>
</dbReference>
<dbReference type="GO" id="GO:0000287">
    <property type="term" value="F:magnesium ion binding"/>
    <property type="evidence" value="ECO:0007669"/>
    <property type="project" value="UniProtKB-UniRule"/>
</dbReference>
<dbReference type="GO" id="GO:0000162">
    <property type="term" value="P:L-tryptophan biosynthetic process"/>
    <property type="evidence" value="ECO:0007669"/>
    <property type="project" value="UniProtKB-UniRule"/>
</dbReference>
<dbReference type="FunFam" id="3.40.1030.10:FF:000002">
    <property type="entry name" value="Anthranilate phosphoribosyltransferase"/>
    <property type="match status" value="1"/>
</dbReference>
<dbReference type="Gene3D" id="3.40.1030.10">
    <property type="entry name" value="Nucleoside phosphorylase/phosphoribosyltransferase catalytic domain"/>
    <property type="match status" value="1"/>
</dbReference>
<dbReference type="Gene3D" id="1.20.970.10">
    <property type="entry name" value="Transferase, Pyrimidine Nucleoside Phosphorylase, Chain C"/>
    <property type="match status" value="1"/>
</dbReference>
<dbReference type="HAMAP" id="MF_00211">
    <property type="entry name" value="TrpD"/>
    <property type="match status" value="1"/>
</dbReference>
<dbReference type="InterPro" id="IPR005940">
    <property type="entry name" value="Anthranilate_Pribosyl_Tfrase"/>
</dbReference>
<dbReference type="InterPro" id="IPR000312">
    <property type="entry name" value="Glycosyl_Trfase_fam3"/>
</dbReference>
<dbReference type="InterPro" id="IPR017459">
    <property type="entry name" value="Glycosyl_Trfase_fam3_N_dom"/>
</dbReference>
<dbReference type="InterPro" id="IPR036320">
    <property type="entry name" value="Glycosyl_Trfase_fam3_N_dom_sf"/>
</dbReference>
<dbReference type="InterPro" id="IPR035902">
    <property type="entry name" value="Nuc_phospho_transferase"/>
</dbReference>
<dbReference type="NCBIfam" id="TIGR01245">
    <property type="entry name" value="trpD"/>
    <property type="match status" value="1"/>
</dbReference>
<dbReference type="PANTHER" id="PTHR43285">
    <property type="entry name" value="ANTHRANILATE PHOSPHORIBOSYLTRANSFERASE"/>
    <property type="match status" value="1"/>
</dbReference>
<dbReference type="PANTHER" id="PTHR43285:SF2">
    <property type="entry name" value="ANTHRANILATE PHOSPHORIBOSYLTRANSFERASE"/>
    <property type="match status" value="1"/>
</dbReference>
<dbReference type="Pfam" id="PF02885">
    <property type="entry name" value="Glycos_trans_3N"/>
    <property type="match status" value="1"/>
</dbReference>
<dbReference type="Pfam" id="PF00591">
    <property type="entry name" value="Glycos_transf_3"/>
    <property type="match status" value="1"/>
</dbReference>
<dbReference type="SUPFAM" id="SSF52418">
    <property type="entry name" value="Nucleoside phosphorylase/phosphoribosyltransferase catalytic domain"/>
    <property type="match status" value="1"/>
</dbReference>
<dbReference type="SUPFAM" id="SSF47648">
    <property type="entry name" value="Nucleoside phosphorylase/phosphoribosyltransferase N-terminal domain"/>
    <property type="match status" value="1"/>
</dbReference>
<keyword id="KW-0028">Amino-acid biosynthesis</keyword>
<keyword id="KW-0057">Aromatic amino acid biosynthesis</keyword>
<keyword id="KW-0328">Glycosyltransferase</keyword>
<keyword id="KW-0460">Magnesium</keyword>
<keyword id="KW-0479">Metal-binding</keyword>
<keyword id="KW-0808">Transferase</keyword>
<keyword id="KW-0822">Tryptophan biosynthesis</keyword>
<name>TRPD_RHOOB</name>
<proteinExistence type="inferred from homology"/>
<organism>
    <name type="scientific">Rhodococcus opacus (strain B4)</name>
    <dbReference type="NCBI Taxonomy" id="632772"/>
    <lineage>
        <taxon>Bacteria</taxon>
        <taxon>Bacillati</taxon>
        <taxon>Actinomycetota</taxon>
        <taxon>Actinomycetes</taxon>
        <taxon>Mycobacteriales</taxon>
        <taxon>Nocardiaceae</taxon>
        <taxon>Rhodococcus</taxon>
    </lineage>
</organism>
<gene>
    <name evidence="1" type="primary">trpD</name>
    <name type="ordered locus">ROP_08560</name>
</gene>
<feature type="chain" id="PRO_1000198838" description="Anthranilate phosphoribosyltransferase">
    <location>
        <begin position="1"/>
        <end position="362"/>
    </location>
</feature>
<feature type="binding site" evidence="1">
    <location>
        <position position="96"/>
    </location>
    <ligand>
        <name>5-phospho-alpha-D-ribose 1-diphosphate</name>
        <dbReference type="ChEBI" id="CHEBI:58017"/>
    </ligand>
</feature>
<feature type="binding site" evidence="1">
    <location>
        <position position="96"/>
    </location>
    <ligand>
        <name>anthranilate</name>
        <dbReference type="ChEBI" id="CHEBI:16567"/>
        <label>1</label>
    </ligand>
</feature>
<feature type="binding site" evidence="1">
    <location>
        <begin position="99"/>
        <end position="100"/>
    </location>
    <ligand>
        <name>5-phospho-alpha-D-ribose 1-diphosphate</name>
        <dbReference type="ChEBI" id="CHEBI:58017"/>
    </ligand>
</feature>
<feature type="binding site" evidence="1">
    <location>
        <position position="104"/>
    </location>
    <ligand>
        <name>5-phospho-alpha-D-ribose 1-diphosphate</name>
        <dbReference type="ChEBI" id="CHEBI:58017"/>
    </ligand>
</feature>
<feature type="binding site" evidence="1">
    <location>
        <begin position="106"/>
        <end position="109"/>
    </location>
    <ligand>
        <name>5-phospho-alpha-D-ribose 1-diphosphate</name>
        <dbReference type="ChEBI" id="CHEBI:58017"/>
    </ligand>
</feature>
<feature type="binding site" evidence="1">
    <location>
        <position position="108"/>
    </location>
    <ligand>
        <name>Mg(2+)</name>
        <dbReference type="ChEBI" id="CHEBI:18420"/>
        <label>1</label>
    </ligand>
</feature>
<feature type="binding site" evidence="1">
    <location>
        <begin position="124"/>
        <end position="132"/>
    </location>
    <ligand>
        <name>5-phospho-alpha-D-ribose 1-diphosphate</name>
        <dbReference type="ChEBI" id="CHEBI:58017"/>
    </ligand>
</feature>
<feature type="binding site" evidence="1">
    <location>
        <position position="127"/>
    </location>
    <ligand>
        <name>anthranilate</name>
        <dbReference type="ChEBI" id="CHEBI:16567"/>
        <label>1</label>
    </ligand>
</feature>
<feature type="binding site" evidence="1">
    <location>
        <position position="136"/>
    </location>
    <ligand>
        <name>5-phospho-alpha-D-ribose 1-diphosphate</name>
        <dbReference type="ChEBI" id="CHEBI:58017"/>
    </ligand>
</feature>
<feature type="binding site" evidence="1">
    <location>
        <position position="182"/>
    </location>
    <ligand>
        <name>anthranilate</name>
        <dbReference type="ChEBI" id="CHEBI:16567"/>
        <label>2</label>
    </ligand>
</feature>
<feature type="binding site" evidence="1">
    <location>
        <position position="240"/>
    </location>
    <ligand>
        <name>Mg(2+)</name>
        <dbReference type="ChEBI" id="CHEBI:18420"/>
        <label>2</label>
    </ligand>
</feature>
<feature type="binding site" evidence="1">
    <location>
        <position position="241"/>
    </location>
    <ligand>
        <name>Mg(2+)</name>
        <dbReference type="ChEBI" id="CHEBI:18420"/>
        <label>1</label>
    </ligand>
</feature>
<feature type="binding site" evidence="1">
    <location>
        <position position="241"/>
    </location>
    <ligand>
        <name>Mg(2+)</name>
        <dbReference type="ChEBI" id="CHEBI:18420"/>
        <label>2</label>
    </ligand>
</feature>